<sequence length="545" mass="58753">MGPDNRRILLATVLSVGILILWQVIFPKKTPPKPAPTPAAEVAKPAAPAAPAPGAAAPAVPAPPPDAPEETVKLAGKGFEATLTTYGGALKSLQLEGDKFRKQEKDREVQIDLVHVTAGQPYPLSLSASPELGGAADVTADPGARAPMRIVAKDASSVTFEGRVGNLAARKTFRVTGKPYELALDVELTGGAGNGTVGVLYPAFMPPDTKSGGIFSGPPLDFVRPVCRAGTTTERFDLAKEGAPEKLEGQVSWAGVDQHYFVAAVLPAEPVGTCTFARGPVKGAGVAALAIPVEGGARKLSLTVYAGPKDLDTLRGYGRGFESAIDYGAVAKFFALFARGLLYVMRWLEAIVRNWGVAIILLTVLVRLVLFPLTYKSMQSMNEMRKLQPEIEKLKAKFGDDREKMNLAVMQLYQKHKVNPLGGCLPMLLQMPVWFALYAALQTSVELYREPFLWMKDLTAHDPYFILPIAMGISSFVMQKLSPQPADNAQAKMMLYFFPGFFTVIMLFVPGGLTLYIFVNNLLSIVQQQLMMKHQRAAPTPAAGK</sequence>
<name>YIDC_ANADE</name>
<gene>
    <name evidence="1" type="primary">yidC</name>
    <name type="ordered locus">Adeh_4358</name>
</gene>
<dbReference type="EMBL" id="CP000251">
    <property type="protein sequence ID" value="ABC84121.1"/>
    <property type="molecule type" value="Genomic_DNA"/>
</dbReference>
<dbReference type="RefSeq" id="WP_011423403.1">
    <property type="nucleotide sequence ID" value="NC_007760.1"/>
</dbReference>
<dbReference type="SMR" id="Q2IHR0"/>
<dbReference type="STRING" id="290397.Adeh_4358"/>
<dbReference type="KEGG" id="ade:Adeh_4358"/>
<dbReference type="eggNOG" id="COG0706">
    <property type="taxonomic scope" value="Bacteria"/>
</dbReference>
<dbReference type="HOGENOM" id="CLU_016535_2_0_7"/>
<dbReference type="OrthoDB" id="9780552at2"/>
<dbReference type="Proteomes" id="UP000001935">
    <property type="component" value="Chromosome"/>
</dbReference>
<dbReference type="GO" id="GO:0005886">
    <property type="term" value="C:plasma membrane"/>
    <property type="evidence" value="ECO:0007669"/>
    <property type="project" value="UniProtKB-SubCell"/>
</dbReference>
<dbReference type="GO" id="GO:0032977">
    <property type="term" value="F:membrane insertase activity"/>
    <property type="evidence" value="ECO:0007669"/>
    <property type="project" value="InterPro"/>
</dbReference>
<dbReference type="GO" id="GO:0051205">
    <property type="term" value="P:protein insertion into membrane"/>
    <property type="evidence" value="ECO:0007669"/>
    <property type="project" value="TreeGrafter"/>
</dbReference>
<dbReference type="GO" id="GO:0015031">
    <property type="term" value="P:protein transport"/>
    <property type="evidence" value="ECO:0007669"/>
    <property type="project" value="UniProtKB-KW"/>
</dbReference>
<dbReference type="CDD" id="cd20070">
    <property type="entry name" value="5TM_YidC_Alb3"/>
    <property type="match status" value="1"/>
</dbReference>
<dbReference type="CDD" id="cd19961">
    <property type="entry name" value="EcYidC-like_peri"/>
    <property type="match status" value="1"/>
</dbReference>
<dbReference type="Gene3D" id="2.70.98.90">
    <property type="match status" value="1"/>
</dbReference>
<dbReference type="HAMAP" id="MF_01810">
    <property type="entry name" value="YidC_type1"/>
    <property type="match status" value="1"/>
</dbReference>
<dbReference type="InterPro" id="IPR019998">
    <property type="entry name" value="Membr_insert_YidC"/>
</dbReference>
<dbReference type="InterPro" id="IPR028053">
    <property type="entry name" value="Membr_insert_YidC_N"/>
</dbReference>
<dbReference type="InterPro" id="IPR001708">
    <property type="entry name" value="YidC/ALB3/OXA1/COX18"/>
</dbReference>
<dbReference type="InterPro" id="IPR028055">
    <property type="entry name" value="YidC/Oxa/ALB_C"/>
</dbReference>
<dbReference type="InterPro" id="IPR047196">
    <property type="entry name" value="YidC_ALB_C"/>
</dbReference>
<dbReference type="InterPro" id="IPR038221">
    <property type="entry name" value="YidC_periplasmic_sf"/>
</dbReference>
<dbReference type="NCBIfam" id="TIGR03593">
    <property type="entry name" value="yidC_nterm"/>
    <property type="match status" value="1"/>
</dbReference>
<dbReference type="NCBIfam" id="TIGR03592">
    <property type="entry name" value="yidC_oxa1_cterm"/>
    <property type="match status" value="1"/>
</dbReference>
<dbReference type="PANTHER" id="PTHR12428:SF65">
    <property type="entry name" value="CYTOCHROME C OXIDASE ASSEMBLY PROTEIN COX18, MITOCHONDRIAL"/>
    <property type="match status" value="1"/>
</dbReference>
<dbReference type="PANTHER" id="PTHR12428">
    <property type="entry name" value="OXA1"/>
    <property type="match status" value="1"/>
</dbReference>
<dbReference type="Pfam" id="PF02096">
    <property type="entry name" value="60KD_IMP"/>
    <property type="match status" value="1"/>
</dbReference>
<dbReference type="Pfam" id="PF14849">
    <property type="entry name" value="YidC_periplas"/>
    <property type="match status" value="1"/>
</dbReference>
<dbReference type="PRINTS" id="PR00701">
    <property type="entry name" value="60KDINNERMP"/>
</dbReference>
<dbReference type="PRINTS" id="PR01900">
    <property type="entry name" value="YIDCPROTEIN"/>
</dbReference>
<protein>
    <recommendedName>
        <fullName evidence="1">Membrane protein insertase YidC</fullName>
    </recommendedName>
    <alternativeName>
        <fullName evidence="1">Foldase YidC</fullName>
    </alternativeName>
    <alternativeName>
        <fullName evidence="1">Membrane integrase YidC</fullName>
    </alternativeName>
    <alternativeName>
        <fullName evidence="1">Membrane protein YidC</fullName>
    </alternativeName>
</protein>
<accession>Q2IHR0</accession>
<reference key="1">
    <citation type="submission" date="2006-01" db="EMBL/GenBank/DDBJ databases">
        <title>Complete sequence of Anaeromyxobacter dehalogenans 2CP-C.</title>
        <authorList>
            <person name="Copeland A."/>
            <person name="Lucas S."/>
            <person name="Lapidus A."/>
            <person name="Barry K."/>
            <person name="Detter J.C."/>
            <person name="Glavina T."/>
            <person name="Hammon N."/>
            <person name="Israni S."/>
            <person name="Pitluck S."/>
            <person name="Brettin T."/>
            <person name="Bruce D."/>
            <person name="Han C."/>
            <person name="Tapia R."/>
            <person name="Gilna P."/>
            <person name="Kiss H."/>
            <person name="Schmutz J."/>
            <person name="Larimer F."/>
            <person name="Land M."/>
            <person name="Kyrpides N."/>
            <person name="Anderson I."/>
            <person name="Sanford R.A."/>
            <person name="Ritalahti K.M."/>
            <person name="Thomas H.S."/>
            <person name="Kirby J.R."/>
            <person name="Zhulin I.B."/>
            <person name="Loeffler F.E."/>
            <person name="Richardson P."/>
        </authorList>
    </citation>
    <scope>NUCLEOTIDE SEQUENCE [LARGE SCALE GENOMIC DNA]</scope>
    <source>
        <strain>2CP-C</strain>
    </source>
</reference>
<comment type="function">
    <text evidence="1">Required for the insertion and/or proper folding and/or complex formation of integral membrane proteins into the membrane. Involved in integration of membrane proteins that insert both dependently and independently of the Sec translocase complex, as well as at least some lipoproteins. Aids folding of multispanning membrane proteins.</text>
</comment>
<comment type="subunit">
    <text evidence="1">Interacts with the Sec translocase complex via SecD. Specifically interacts with transmembrane segments of nascent integral membrane proteins during membrane integration.</text>
</comment>
<comment type="subcellular location">
    <subcellularLocation>
        <location evidence="1">Cell inner membrane</location>
        <topology evidence="1">Multi-pass membrane protein</topology>
    </subcellularLocation>
</comment>
<comment type="similarity">
    <text evidence="1">Belongs to the OXA1/ALB3/YidC family. Type 1 subfamily.</text>
</comment>
<feature type="chain" id="PRO_1000070055" description="Membrane protein insertase YidC">
    <location>
        <begin position="1"/>
        <end position="545"/>
    </location>
</feature>
<feature type="transmembrane region" description="Helical" evidence="1">
    <location>
        <begin position="8"/>
        <end position="28"/>
    </location>
</feature>
<feature type="transmembrane region" description="Helical" evidence="1">
    <location>
        <begin position="325"/>
        <end position="345"/>
    </location>
</feature>
<feature type="transmembrane region" description="Helical" evidence="1">
    <location>
        <begin position="355"/>
        <end position="375"/>
    </location>
</feature>
<feature type="transmembrane region" description="Helical" evidence="1">
    <location>
        <begin position="421"/>
        <end position="441"/>
    </location>
</feature>
<feature type="transmembrane region" description="Helical" evidence="1">
    <location>
        <begin position="458"/>
        <end position="478"/>
    </location>
</feature>
<feature type="transmembrane region" description="Helical" evidence="1">
    <location>
        <begin position="497"/>
        <end position="517"/>
    </location>
</feature>
<feature type="region of interest" description="Disordered" evidence="2">
    <location>
        <begin position="31"/>
        <end position="69"/>
    </location>
</feature>
<feature type="compositionally biased region" description="Low complexity" evidence="2">
    <location>
        <begin position="38"/>
        <end position="59"/>
    </location>
</feature>
<proteinExistence type="inferred from homology"/>
<evidence type="ECO:0000255" key="1">
    <source>
        <dbReference type="HAMAP-Rule" id="MF_01810"/>
    </source>
</evidence>
<evidence type="ECO:0000256" key="2">
    <source>
        <dbReference type="SAM" id="MobiDB-lite"/>
    </source>
</evidence>
<keyword id="KW-0997">Cell inner membrane</keyword>
<keyword id="KW-1003">Cell membrane</keyword>
<keyword id="KW-0143">Chaperone</keyword>
<keyword id="KW-0472">Membrane</keyword>
<keyword id="KW-0653">Protein transport</keyword>
<keyword id="KW-1185">Reference proteome</keyword>
<keyword id="KW-0812">Transmembrane</keyword>
<keyword id="KW-1133">Transmembrane helix</keyword>
<keyword id="KW-0813">Transport</keyword>
<organism>
    <name type="scientific">Anaeromyxobacter dehalogenans (strain 2CP-C)</name>
    <dbReference type="NCBI Taxonomy" id="290397"/>
    <lineage>
        <taxon>Bacteria</taxon>
        <taxon>Pseudomonadati</taxon>
        <taxon>Myxococcota</taxon>
        <taxon>Myxococcia</taxon>
        <taxon>Myxococcales</taxon>
        <taxon>Cystobacterineae</taxon>
        <taxon>Anaeromyxobacteraceae</taxon>
        <taxon>Anaeromyxobacter</taxon>
    </lineage>
</organism>